<proteinExistence type="inferred from homology"/>
<reference key="1">
    <citation type="submission" date="2009-01" db="EMBL/GenBank/DDBJ databases">
        <title>Complete sequence of chromosome of Arthrobacter chlorophenolicus A6.</title>
        <authorList>
            <consortium name="US DOE Joint Genome Institute"/>
            <person name="Lucas S."/>
            <person name="Copeland A."/>
            <person name="Lapidus A."/>
            <person name="Glavina del Rio T."/>
            <person name="Tice H."/>
            <person name="Bruce D."/>
            <person name="Goodwin L."/>
            <person name="Pitluck S."/>
            <person name="Goltsman E."/>
            <person name="Clum A."/>
            <person name="Larimer F."/>
            <person name="Land M."/>
            <person name="Hauser L."/>
            <person name="Kyrpides N."/>
            <person name="Mikhailova N."/>
            <person name="Jansson J."/>
            <person name="Richardson P."/>
        </authorList>
    </citation>
    <scope>NUCLEOTIDE SEQUENCE [LARGE SCALE GENOMIC DNA]</scope>
    <source>
        <strain>ATCC 700700 / DSM 12829 / CIP 107037 / JCM 12360 / KCTC 9906 / NCIMB 13794 / A6</strain>
    </source>
</reference>
<protein>
    <recommendedName>
        <fullName evidence="1">Large ribosomal subunit protein bL36</fullName>
    </recommendedName>
    <alternativeName>
        <fullName evidence="2">50S ribosomal protein L36</fullName>
    </alternativeName>
</protein>
<sequence length="37" mass="4378">MKVKPSVKQICEKCKVIRRNGRVMVICENPRHKQRQG</sequence>
<organism>
    <name type="scientific">Pseudarthrobacter chlorophenolicus (strain ATCC 700700 / DSM 12829 / CIP 107037 / JCM 12360 / KCTC 9906 / NCIMB 13794 / A6)</name>
    <name type="common">Arthrobacter chlorophenolicus</name>
    <dbReference type="NCBI Taxonomy" id="452863"/>
    <lineage>
        <taxon>Bacteria</taxon>
        <taxon>Bacillati</taxon>
        <taxon>Actinomycetota</taxon>
        <taxon>Actinomycetes</taxon>
        <taxon>Micrococcales</taxon>
        <taxon>Micrococcaceae</taxon>
        <taxon>Pseudarthrobacter</taxon>
    </lineage>
</organism>
<evidence type="ECO:0000255" key="1">
    <source>
        <dbReference type="HAMAP-Rule" id="MF_00251"/>
    </source>
</evidence>
<evidence type="ECO:0000305" key="2"/>
<feature type="chain" id="PRO_1000196160" description="Large ribosomal subunit protein bL36">
    <location>
        <begin position="1"/>
        <end position="37"/>
    </location>
</feature>
<dbReference type="EMBL" id="CP001341">
    <property type="protein sequence ID" value="ACL40623.1"/>
    <property type="molecule type" value="Genomic_DNA"/>
</dbReference>
<dbReference type="RefSeq" id="WP_009358722.1">
    <property type="nucleotide sequence ID" value="NC_011886.1"/>
</dbReference>
<dbReference type="SMR" id="B8HCX7"/>
<dbReference type="STRING" id="452863.Achl_2658"/>
<dbReference type="GeneID" id="97421031"/>
<dbReference type="KEGG" id="ach:Achl_2658"/>
<dbReference type="eggNOG" id="COG0257">
    <property type="taxonomic scope" value="Bacteria"/>
</dbReference>
<dbReference type="HOGENOM" id="CLU_135723_6_2_11"/>
<dbReference type="OrthoDB" id="9802520at2"/>
<dbReference type="Proteomes" id="UP000002505">
    <property type="component" value="Chromosome"/>
</dbReference>
<dbReference type="GO" id="GO:0005737">
    <property type="term" value="C:cytoplasm"/>
    <property type="evidence" value="ECO:0007669"/>
    <property type="project" value="UniProtKB-ARBA"/>
</dbReference>
<dbReference type="GO" id="GO:1990904">
    <property type="term" value="C:ribonucleoprotein complex"/>
    <property type="evidence" value="ECO:0007669"/>
    <property type="project" value="UniProtKB-KW"/>
</dbReference>
<dbReference type="GO" id="GO:0005840">
    <property type="term" value="C:ribosome"/>
    <property type="evidence" value="ECO:0007669"/>
    <property type="project" value="UniProtKB-KW"/>
</dbReference>
<dbReference type="GO" id="GO:0003735">
    <property type="term" value="F:structural constituent of ribosome"/>
    <property type="evidence" value="ECO:0007669"/>
    <property type="project" value="InterPro"/>
</dbReference>
<dbReference type="GO" id="GO:0006412">
    <property type="term" value="P:translation"/>
    <property type="evidence" value="ECO:0007669"/>
    <property type="project" value="UniProtKB-UniRule"/>
</dbReference>
<dbReference type="HAMAP" id="MF_00251">
    <property type="entry name" value="Ribosomal_bL36"/>
    <property type="match status" value="1"/>
</dbReference>
<dbReference type="InterPro" id="IPR000473">
    <property type="entry name" value="Ribosomal_bL36"/>
</dbReference>
<dbReference type="InterPro" id="IPR035977">
    <property type="entry name" value="Ribosomal_bL36_sp"/>
</dbReference>
<dbReference type="NCBIfam" id="TIGR01022">
    <property type="entry name" value="rpmJ_bact"/>
    <property type="match status" value="1"/>
</dbReference>
<dbReference type="PANTHER" id="PTHR42888">
    <property type="entry name" value="50S RIBOSOMAL PROTEIN L36, CHLOROPLASTIC"/>
    <property type="match status" value="1"/>
</dbReference>
<dbReference type="PANTHER" id="PTHR42888:SF1">
    <property type="entry name" value="LARGE RIBOSOMAL SUBUNIT PROTEIN BL36C"/>
    <property type="match status" value="1"/>
</dbReference>
<dbReference type="Pfam" id="PF00444">
    <property type="entry name" value="Ribosomal_L36"/>
    <property type="match status" value="1"/>
</dbReference>
<dbReference type="SUPFAM" id="SSF57840">
    <property type="entry name" value="Ribosomal protein L36"/>
    <property type="match status" value="1"/>
</dbReference>
<dbReference type="PROSITE" id="PS00828">
    <property type="entry name" value="RIBOSOMAL_L36"/>
    <property type="match status" value="1"/>
</dbReference>
<accession>B8HCX7</accession>
<comment type="similarity">
    <text evidence="1">Belongs to the bacterial ribosomal protein bL36 family.</text>
</comment>
<name>RL36_PSECP</name>
<gene>
    <name evidence="1" type="primary">rpmJ</name>
    <name type="ordered locus">Achl_2658</name>
</gene>
<keyword id="KW-0687">Ribonucleoprotein</keyword>
<keyword id="KW-0689">Ribosomal protein</keyword>